<name>SDNO_SORAA</name>
<gene>
    <name evidence="8" type="primary">sdnO</name>
</gene>
<dbReference type="EC" id="2.3.1.-" evidence="9"/>
<dbReference type="EMBL" id="LC079035">
    <property type="protein sequence ID" value="BAV32159.1"/>
    <property type="molecule type" value="Genomic_DNA"/>
</dbReference>
<dbReference type="SMR" id="A0A1B4XBH3"/>
<dbReference type="GO" id="GO:0004312">
    <property type="term" value="F:fatty acid synthase activity"/>
    <property type="evidence" value="ECO:0007669"/>
    <property type="project" value="TreeGrafter"/>
</dbReference>
<dbReference type="GO" id="GO:0016491">
    <property type="term" value="F:oxidoreductase activity"/>
    <property type="evidence" value="ECO:0007669"/>
    <property type="project" value="UniProtKB-KW"/>
</dbReference>
<dbReference type="GO" id="GO:0031177">
    <property type="term" value="F:phosphopantetheine binding"/>
    <property type="evidence" value="ECO:0007669"/>
    <property type="project" value="InterPro"/>
</dbReference>
<dbReference type="GO" id="GO:0017000">
    <property type="term" value="P:antibiotic biosynthetic process"/>
    <property type="evidence" value="ECO:0007669"/>
    <property type="project" value="UniProtKB-KW"/>
</dbReference>
<dbReference type="GO" id="GO:0006633">
    <property type="term" value="P:fatty acid biosynthetic process"/>
    <property type="evidence" value="ECO:0007669"/>
    <property type="project" value="TreeGrafter"/>
</dbReference>
<dbReference type="GO" id="GO:0044550">
    <property type="term" value="P:secondary metabolite biosynthetic process"/>
    <property type="evidence" value="ECO:0007669"/>
    <property type="project" value="TreeGrafter"/>
</dbReference>
<dbReference type="CDD" id="cd05195">
    <property type="entry name" value="enoyl_red"/>
    <property type="match status" value="1"/>
</dbReference>
<dbReference type="CDD" id="cd00833">
    <property type="entry name" value="PKS"/>
    <property type="match status" value="1"/>
</dbReference>
<dbReference type="FunFam" id="3.40.366.10:FF:000002">
    <property type="entry name" value="Probable polyketide synthase 2"/>
    <property type="match status" value="1"/>
</dbReference>
<dbReference type="Gene3D" id="3.40.47.10">
    <property type="match status" value="1"/>
</dbReference>
<dbReference type="Gene3D" id="1.10.1200.10">
    <property type="entry name" value="ACP-like"/>
    <property type="match status" value="1"/>
</dbReference>
<dbReference type="Gene3D" id="3.30.559.10">
    <property type="entry name" value="Chloramphenicol acetyltransferase-like domain"/>
    <property type="match status" value="1"/>
</dbReference>
<dbReference type="Gene3D" id="3.30.559.70">
    <property type="entry name" value="Choline/Carnitine o-acyltransferase, domain 2"/>
    <property type="match status" value="1"/>
</dbReference>
<dbReference type="Gene3D" id="3.40.366.10">
    <property type="entry name" value="Malonyl-Coenzyme A Acyl Carrier Protein, domain 2"/>
    <property type="match status" value="1"/>
</dbReference>
<dbReference type="Gene3D" id="3.90.180.10">
    <property type="entry name" value="Medium-chain alcohol dehydrogenases, catalytic domain"/>
    <property type="match status" value="1"/>
</dbReference>
<dbReference type="Gene3D" id="3.40.50.720">
    <property type="entry name" value="NAD(P)-binding Rossmann-like Domain"/>
    <property type="match status" value="1"/>
</dbReference>
<dbReference type="Gene3D" id="3.10.129.110">
    <property type="entry name" value="Polyketide synthase dehydratase"/>
    <property type="match status" value="1"/>
</dbReference>
<dbReference type="Gene3D" id="3.40.50.150">
    <property type="entry name" value="Vaccinia Virus protein VP39"/>
    <property type="match status" value="1"/>
</dbReference>
<dbReference type="InterPro" id="IPR001227">
    <property type="entry name" value="Ac_transferase_dom_sf"/>
</dbReference>
<dbReference type="InterPro" id="IPR036736">
    <property type="entry name" value="ACP-like_sf"/>
</dbReference>
<dbReference type="InterPro" id="IPR014043">
    <property type="entry name" value="Acyl_transferase_dom"/>
</dbReference>
<dbReference type="InterPro" id="IPR016035">
    <property type="entry name" value="Acyl_Trfase/lysoPLipase"/>
</dbReference>
<dbReference type="InterPro" id="IPR023213">
    <property type="entry name" value="CAT-like_dom_sf"/>
</dbReference>
<dbReference type="InterPro" id="IPR039551">
    <property type="entry name" value="Cho/carn_acyl_trans"/>
</dbReference>
<dbReference type="InterPro" id="IPR042231">
    <property type="entry name" value="Cho/carn_acyl_trans_2"/>
</dbReference>
<dbReference type="InterPro" id="IPR011032">
    <property type="entry name" value="GroES-like_sf"/>
</dbReference>
<dbReference type="InterPro" id="IPR014031">
    <property type="entry name" value="Ketoacyl_synth_C"/>
</dbReference>
<dbReference type="InterPro" id="IPR014030">
    <property type="entry name" value="Ketoacyl_synth_N"/>
</dbReference>
<dbReference type="InterPro" id="IPR016036">
    <property type="entry name" value="Malonyl_transacylase_ACP-bd"/>
</dbReference>
<dbReference type="InterPro" id="IPR036291">
    <property type="entry name" value="NAD(P)-bd_dom_sf"/>
</dbReference>
<dbReference type="InterPro" id="IPR032821">
    <property type="entry name" value="PKS_assoc"/>
</dbReference>
<dbReference type="InterPro" id="IPR020841">
    <property type="entry name" value="PKS_Beta-ketoAc_synthase_dom"/>
</dbReference>
<dbReference type="InterPro" id="IPR042104">
    <property type="entry name" value="PKS_dehydratase_sf"/>
</dbReference>
<dbReference type="InterPro" id="IPR020807">
    <property type="entry name" value="PKS_DH"/>
</dbReference>
<dbReference type="InterPro" id="IPR049551">
    <property type="entry name" value="PKS_DH_C"/>
</dbReference>
<dbReference type="InterPro" id="IPR049552">
    <property type="entry name" value="PKS_DH_N"/>
</dbReference>
<dbReference type="InterPro" id="IPR020843">
    <property type="entry name" value="PKS_ER"/>
</dbReference>
<dbReference type="InterPro" id="IPR013968">
    <property type="entry name" value="PKS_KR"/>
</dbReference>
<dbReference type="InterPro" id="IPR049900">
    <property type="entry name" value="PKS_mFAS_DH"/>
</dbReference>
<dbReference type="InterPro" id="IPR050091">
    <property type="entry name" value="PKS_NRPS_Biosynth_Enz"/>
</dbReference>
<dbReference type="InterPro" id="IPR020806">
    <property type="entry name" value="PKS_PP-bd"/>
</dbReference>
<dbReference type="InterPro" id="IPR009081">
    <property type="entry name" value="PP-bd_ACP"/>
</dbReference>
<dbReference type="InterPro" id="IPR006162">
    <property type="entry name" value="Ppantetheine_attach_site"/>
</dbReference>
<dbReference type="InterPro" id="IPR029063">
    <property type="entry name" value="SAM-dependent_MTases_sf"/>
</dbReference>
<dbReference type="InterPro" id="IPR016039">
    <property type="entry name" value="Thiolase-like"/>
</dbReference>
<dbReference type="PANTHER" id="PTHR43775">
    <property type="entry name" value="FATTY ACID SYNTHASE"/>
    <property type="match status" value="1"/>
</dbReference>
<dbReference type="PANTHER" id="PTHR43775:SF22">
    <property type="entry name" value="SYNTHASE, PUTATIVE (JCVI)-RELATED"/>
    <property type="match status" value="1"/>
</dbReference>
<dbReference type="Pfam" id="PF23297">
    <property type="entry name" value="ACP_SdgA_C"/>
    <property type="match status" value="1"/>
</dbReference>
<dbReference type="Pfam" id="PF00698">
    <property type="entry name" value="Acyl_transf_1"/>
    <property type="match status" value="1"/>
</dbReference>
<dbReference type="Pfam" id="PF00755">
    <property type="entry name" value="Carn_acyltransf"/>
    <property type="match status" value="1"/>
</dbReference>
<dbReference type="Pfam" id="PF16197">
    <property type="entry name" value="KAsynt_C_assoc"/>
    <property type="match status" value="1"/>
</dbReference>
<dbReference type="Pfam" id="PF00109">
    <property type="entry name" value="ketoacyl-synt"/>
    <property type="match status" value="1"/>
</dbReference>
<dbReference type="Pfam" id="PF02801">
    <property type="entry name" value="Ketoacyl-synt_C"/>
    <property type="match status" value="1"/>
</dbReference>
<dbReference type="Pfam" id="PF08659">
    <property type="entry name" value="KR"/>
    <property type="match status" value="1"/>
</dbReference>
<dbReference type="Pfam" id="PF21089">
    <property type="entry name" value="PKS_DH_N"/>
    <property type="match status" value="1"/>
</dbReference>
<dbReference type="Pfam" id="PF14765">
    <property type="entry name" value="PS-DH"/>
    <property type="match status" value="1"/>
</dbReference>
<dbReference type="SMART" id="SM00827">
    <property type="entry name" value="PKS_AT"/>
    <property type="match status" value="1"/>
</dbReference>
<dbReference type="SMART" id="SM00826">
    <property type="entry name" value="PKS_DH"/>
    <property type="match status" value="1"/>
</dbReference>
<dbReference type="SMART" id="SM00829">
    <property type="entry name" value="PKS_ER"/>
    <property type="match status" value="1"/>
</dbReference>
<dbReference type="SMART" id="SM00822">
    <property type="entry name" value="PKS_KR"/>
    <property type="match status" value="1"/>
</dbReference>
<dbReference type="SMART" id="SM00825">
    <property type="entry name" value="PKS_KS"/>
    <property type="match status" value="1"/>
</dbReference>
<dbReference type="SMART" id="SM00823">
    <property type="entry name" value="PKS_PP"/>
    <property type="match status" value="1"/>
</dbReference>
<dbReference type="SUPFAM" id="SSF47336">
    <property type="entry name" value="ACP-like"/>
    <property type="match status" value="1"/>
</dbReference>
<dbReference type="SUPFAM" id="SSF52777">
    <property type="entry name" value="CoA-dependent acyltransferases"/>
    <property type="match status" value="2"/>
</dbReference>
<dbReference type="SUPFAM" id="SSF52151">
    <property type="entry name" value="FabD/lysophospholipase-like"/>
    <property type="match status" value="1"/>
</dbReference>
<dbReference type="SUPFAM" id="SSF50129">
    <property type="entry name" value="GroES-like"/>
    <property type="match status" value="1"/>
</dbReference>
<dbReference type="SUPFAM" id="SSF51735">
    <property type="entry name" value="NAD(P)-binding Rossmann-fold domains"/>
    <property type="match status" value="2"/>
</dbReference>
<dbReference type="SUPFAM" id="SSF55048">
    <property type="entry name" value="Probable ACP-binding domain of malonyl-CoA ACP transacylase"/>
    <property type="match status" value="1"/>
</dbReference>
<dbReference type="SUPFAM" id="SSF53901">
    <property type="entry name" value="Thiolase-like"/>
    <property type="match status" value="1"/>
</dbReference>
<dbReference type="PROSITE" id="PS50075">
    <property type="entry name" value="CARRIER"/>
    <property type="match status" value="1"/>
</dbReference>
<dbReference type="PROSITE" id="PS52004">
    <property type="entry name" value="KS3_2"/>
    <property type="match status" value="1"/>
</dbReference>
<dbReference type="PROSITE" id="PS00012">
    <property type="entry name" value="PHOSPHOPANTETHEINE"/>
    <property type="match status" value="1"/>
</dbReference>
<dbReference type="PROSITE" id="PS52019">
    <property type="entry name" value="PKS_MFAS_DH"/>
    <property type="match status" value="1"/>
</dbReference>
<organism>
    <name type="scientific">Sordaria araneosa</name>
    <name type="common">Pleurage araneosa</name>
    <dbReference type="NCBI Taxonomy" id="573841"/>
    <lineage>
        <taxon>Eukaryota</taxon>
        <taxon>Fungi</taxon>
        <taxon>Dikarya</taxon>
        <taxon>Ascomycota</taxon>
        <taxon>Pezizomycotina</taxon>
        <taxon>Sordariomycetes</taxon>
        <taxon>Sordariomycetidae</taxon>
        <taxon>Sordariales</taxon>
        <taxon>Sordariaceae</taxon>
        <taxon>Sordaria</taxon>
    </lineage>
</organism>
<accession>A0A1B4XBH3</accession>
<feature type="chain" id="PRO_0000441065" description="Highly reducing polyketide synthase sdnO">
    <location>
        <begin position="1"/>
        <end position="3084"/>
    </location>
</feature>
<feature type="domain" description="Ketosynthase family 3 (KS3)" evidence="4">
    <location>
        <begin position="4"/>
        <end position="430"/>
    </location>
</feature>
<feature type="domain" description="PKS/mFAS DH" evidence="5">
    <location>
        <begin position="931"/>
        <end position="1275"/>
    </location>
</feature>
<feature type="domain" description="Carrier" evidence="3">
    <location>
        <begin position="2363"/>
        <end position="2440"/>
    </location>
</feature>
<feature type="region of interest" description="Malonyl-CoA:ACP transacylase (MAT) domain" evidence="2 9">
    <location>
        <begin position="541"/>
        <end position="841"/>
    </location>
</feature>
<feature type="region of interest" description="Dehydratase (DH) domain" evidence="2 9">
    <location>
        <begin position="931"/>
        <end position="1243"/>
    </location>
</feature>
<feature type="region of interest" description="N-terminal hotdog fold" evidence="5">
    <location>
        <begin position="931"/>
        <end position="1071"/>
    </location>
</feature>
<feature type="region of interest" description="C-terminal hotdog fold" evidence="5">
    <location>
        <begin position="1099"/>
        <end position="1275"/>
    </location>
</feature>
<feature type="region of interest" description="Enoylreductase (ER) domain" evidence="2 9">
    <location>
        <begin position="1733"/>
        <end position="2045"/>
    </location>
</feature>
<feature type="region of interest" description="Catalytic ketoreductase (KRc) domain" evidence="2 9">
    <location>
        <begin position="2069"/>
        <end position="2252"/>
    </location>
</feature>
<feature type="region of interest" description="Disordered" evidence="6">
    <location>
        <begin position="2445"/>
        <end position="2501"/>
    </location>
</feature>
<feature type="region of interest" description="Choline/carnitine acyltransferase domain" evidence="2 9">
    <location>
        <begin position="2864"/>
        <end position="3084"/>
    </location>
</feature>
<feature type="compositionally biased region" description="Polar residues" evidence="6">
    <location>
        <begin position="2456"/>
        <end position="2481"/>
    </location>
</feature>
<feature type="compositionally biased region" description="Basic and acidic residues" evidence="6">
    <location>
        <begin position="2482"/>
        <end position="2492"/>
    </location>
</feature>
<feature type="active site" description="For beta-ketoacyl synthase activity" evidence="4">
    <location>
        <position position="178"/>
    </location>
</feature>
<feature type="active site" description="For beta-ketoacyl synthase activity" evidence="4">
    <location>
        <position position="313"/>
    </location>
</feature>
<feature type="active site" description="For beta-ketoacyl synthase activity" evidence="4">
    <location>
        <position position="353"/>
    </location>
</feature>
<feature type="active site" description="For malonyltransferase activity" evidence="1">
    <location>
        <position position="632"/>
    </location>
</feature>
<feature type="active site" description="Proton acceptor; for dehydratase activity" evidence="5">
    <location>
        <position position="963"/>
    </location>
</feature>
<feature type="active site" description="Proton donor; for dehydratase activity" evidence="5">
    <location>
        <position position="1177"/>
    </location>
</feature>
<feature type="modified residue" description="O-(pantetheine 4'-phosphoryl)serine" evidence="3">
    <location>
        <position position="2400"/>
    </location>
</feature>
<evidence type="ECO:0000250" key="1">
    <source>
        <dbReference type="UniProtKB" id="L7X8J4"/>
    </source>
</evidence>
<evidence type="ECO:0000255" key="2"/>
<evidence type="ECO:0000255" key="3">
    <source>
        <dbReference type="PROSITE-ProRule" id="PRU00258"/>
    </source>
</evidence>
<evidence type="ECO:0000255" key="4">
    <source>
        <dbReference type="PROSITE-ProRule" id="PRU01348"/>
    </source>
</evidence>
<evidence type="ECO:0000255" key="5">
    <source>
        <dbReference type="PROSITE-ProRule" id="PRU01363"/>
    </source>
</evidence>
<evidence type="ECO:0000256" key="6">
    <source>
        <dbReference type="SAM" id="MobiDB-lite"/>
    </source>
</evidence>
<evidence type="ECO:0000269" key="7">
    <source>
    </source>
</evidence>
<evidence type="ECO:0000303" key="8">
    <source>
    </source>
</evidence>
<evidence type="ECO:0000305" key="9">
    <source>
    </source>
</evidence>
<protein>
    <recommendedName>
        <fullName evidence="8">Highly reducing polyketide synthase sdnO</fullName>
        <ecNumber evidence="9">2.3.1.-</ecNumber>
    </recommendedName>
    <alternativeName>
        <fullName evidence="8">Sordarin/hypoxysordarin biosynthesis cluster protein O</fullName>
    </alternativeName>
</protein>
<proteinExistence type="inferred from homology"/>
<reference key="1">
    <citation type="journal article" date="2016" name="J. Antibiot.">
        <title>Genome mining of the sordarin biosynthetic gene cluster from Sordaria araneosa Cain ATCC 36386: characterization of cycloaraneosene synthase and GDP-6-deoxyaltrose transferase.</title>
        <authorList>
            <person name="Kudo F."/>
            <person name="Matsuura Y."/>
            <person name="Hayashi T."/>
            <person name="Fukushima M."/>
            <person name="Eguchi T."/>
        </authorList>
    </citation>
    <scope>NUCLEOTIDE SEQUENCE [GENOMIC DNA]</scope>
    <scope>FUNCTION</scope>
    <scope>DOMAIN</scope>
    <scope>PATHWAY</scope>
    <source>
        <strain>ATCC 36386 / NRRL 3196</strain>
    </source>
</reference>
<keyword id="KW-0045">Antibiotic biosynthesis</keyword>
<keyword id="KW-0511">Multifunctional enzyme</keyword>
<keyword id="KW-0560">Oxidoreductase</keyword>
<keyword id="KW-0596">Phosphopantetheine</keyword>
<keyword id="KW-0597">Phosphoprotein</keyword>
<keyword id="KW-0808">Transferase</keyword>
<sequence>MASPIPLAVVGIACRFPGDATNPEKLWDLLAEGKSAWSRVPSDRWNEEAFLHPSPDDMNGSHNHLGGHFLRQDVGEFDAGFFNVLPGEAAAMDPQQRLLLETTYEAIESAGIPKESLAGSKTAVYMAMFTRDYDRNVYKDMMSIPKYHVTGTGDAILANRISYLFDLRGPSMTIDTGCSGGMAAVAHACQALRSGVSDVALAGAANLILSPDHMVGMSNLHMLNAEGKSYAFDDRGAGYGRGEGIATLVIKRLDDAIKANDPIRAIIRDAAVNQDGHTAGITLPSGQAQEALERQVWSNIGLDPREVGYVEAHGTGTQAGDSAELEGISRVFCRGRTDSESLTVGSIKSNIGHTECVSGLAALIKSILVLEKGAIPPNVNYQTAKPGLDLDKRKLRVPTTLQKWSQPGVPRVSVNSFGYGGTNAHAVLEKAPETQRDSASDSQEDVPRLFTLSAASQSSLQDMAASIAGWVSQERDSQPLPTSRLQDIAYTLSERRSLMAWRFWSVASNEHELVDSLYEASRSTENISKISSSEPPPKISFIFTGQGAQWPGMGRELLQSNAVFAESISRSNKILAGLGAAWGLVDEILRDKGPSRLREAELAQPATTAIQIALVDLARHWGIVPDSVVGHSSGEIAAAYAAGYLSPQQAITAAYYRGFSSAVARSKGLGKGGMLAVGLGEDEVAPYLARISPENGEAVVACQNSPKSVTISGDDAAIAELSELLTKDDVFNRRLLVDTAYHSHHMEAAADEYRSSLGDMEPRNSTGTINMFSSVTGSLKTDDKFDANYWVSNLVGKVRFRDALQALCQHDQTSSSPQTHRVFIEIGPHAALAGPLRQSVADMPTPLPHSYTSALVRGTSASQSALSMAGSLFSRGYPLNISALNSASSLSSSSSPSVIPNLPTYAWDHTKRHWHESRLSRDYRMRKHAYHDLLGLRMTDTTPLRPAWRHMVGVEGLPWLRDHVVDGLIVFPGAGYMCMALQAAEQLALDLPSHSKVKRMRLQNVAFLKGLVIPDSTRERVEVQLVLTPLTGDNGPDNKLGYSFLVTAYTADDDKWTEHCRGSVLIDLVSSSAASSQSTVGFESQHQITYAEAVSSLNLQPGEDIPPSELYQTLRKGGNAYGPTFSGIQVFRLLPDNASEDTSSANVALSTIAIPDIQSIMPAKHMQPHIIHPSTLDVLLHTTLPLVSRRLGVVGSVMPVRIDDLVIDLGEQQLETKTDAQLRAITTLTGSGFRSAEADMLVFPAPSSEVDQGQLMPVISVMGMELRSLAALDGAAAGDPATENLSVEESRDICYEMKWVVDESFLSAEHLVNAVQQRDSSFDTPLERCLGALDKYLGIKALKEFMADLKVLEIAAAGDSNGECTLAFLDALQTRGALPAEYDLTAQPHGDALWQDKYPGVVTVRPLLDSMNHGLDGHYDIVFAAGSLNGSDGVTVQTSLSNIRSLMKPGAVLVAIHDTNSSLSADVFSQTGFNTQLSIPFDELSLTIARAVGSASTTTPVKLQFIAEPGFSTSTSIRTIIDNLPSTLTAKGVQIITAPEPCILNWTKGNLYDQDSDSEPVTLNIVLDNGASPILPTVTNGTPTFSNIVSLLQKQHSKVLWVSLSDDEQHKLNPQKHLITGVARTAHAENELLELVTVDVQQPISESTTSGLVNFLGDIAASFPGLDGAAGETGTKKEREYIYIGENHILVPRVMSSPSLNRQIKKSKETVTSTENFVMTPLKLDIAGKDGPGTAHAATFVEDESHRQPLGEDCVEIQAKAFGVGSSSWASKGRPSSASSIAEYAGVITAIGSGVLISSGLKIGDRVVAWAETSLSFASRPRIPASQVRVLPDHVSLSTGAGLPVSLMTACHALREISNVQPGQVVFIDGAASDIGQAALLVARYLGAKVIVAVSTSDEASFLQDKFGLPLANILPRASPFLRHQLRKLLASGGAIDAILSCAGSAVPGEIIKTQKPFGTLVQVGGTTGAMTASAVNSTVVSLDLGSFLTQTHPSKATRLFDMAMETVHRGLDLEPIRIAYLPMTNLNEALKSARRHENMTKYVVEVGQEAMVKVARPSYILPKLDEHATYVVAGGLGDLGQRFLRLMAKAGARYLVTLSRSGAREGQQSALERELNSLSPLSSLNLLCLKCDVSKEAKIQNSLAEIKAAGFPSVRGVIQASLVLGDSTLDNMTAQDFDRVLQAKAFGTLHLQRVFVPEGLAFFISLSSAVNMIGSAGQANYNAANSLQDALAQFDKSSDCFYMALNIGLIEDATVNSDVIIQSVQRQGLTTIYHDELDAYFEYSLSAEARQAGCHQAVIGFTPESIAKTSIVNGTAKTLMFTHVRRQISKQGQTEDDDAGGASGAVKTFAEFVAQGTHEQDDIEAFAARAIANKLADLMLIEPEDVELDESLNDFGLDSLIAIELRNWIMRELGSPIQTSEVLGSENIWALARKVTLRSVHVTGGAGGDASSTGNSESMARTPSDSSTVPTSIPATPSRSPSREPPAKETLTKSQQHLPIPDLTETLNMLVESRTAIGSLEEKAEIERVIQDFLTTDGPELVEILRSNNDSSSDARLDFYNNHLHLERREPLQDHALFFIGHLAEGEAGAAPPPKHTQAERAAIITGAAMHFKQRLESGSLEQHKLNDIVLCMDTLQWLFHTIQEPGVATDLAQKYPSNNKVVAMRKGHIFEIDVHPEDDYAALHQIFSDIIASSDSSSDSIPKVSVLTTKPRHEWAVLRSQIQSLSPTNAETIDAIESCAFIVSLDHSSPETTSERSTSILLNDLHLSNRWLDKMLTFTVASNGVSSLLGENTMLDGLSARQLSEYMTNEIFTNPKLSPPTSPPASTIRPLLFTLTPHVVETISQQIQHNLSTYHPISSSRHFYSQLNRAFLGSRGMRSKGTVLVAIAMATRLFFGHYEPLWETVTLAKYKQGRIDWLQTLTPDMVAFVDSLIAIHSHSLTSSSEVDWKGMNKLLKEVSISHVQNLQRVADGRGYVEALYSLMGTAISQGHDLPELFKSEAWKQTDRHLSPKRAKTDCLGSGGYLRMQEGGFLMPNPGSLFIHYEVHHRDPLVNVSGREEDVARFEGILGACLGVVRRVVEG</sequence>
<comment type="function">
    <text evidence="7">Highly reducing polyketide synthase; part of the gene cluster that mediates the biosynthesis of sordarin and hypoxysordarin, glycoside antibiotics with a unique tetracyclic diterpene aglycone structure (PubMed:27072286). First, the geranylgeranyl diphosphate synthase sdnC constructs GGDP from farnesyl diphosphate and isopentenyl diphosphate (PubMed:27072286). The diterpene cyclase sdnA then catalyzes the cyclization of GGDP to afford cycloaraneosene (PubMed:27072286). Cycloaraneosene is then hydroxylated four times by the putative cytochrome P450 monooxygenases sdnB, sdnE, sdnF and sdnH to give a hydroxylated cycloaraneosene derivative such as cycloaraneosene-8,9,13,19-tetraol (PubMed:27072286). Although the order of the hydroxylations is unclear, at least C8, C9 and C13 of the cycloaraneosene skeleton are hydroxylated before the sordaricin formation (PubMed:27072286). Dehydration of the 13-hydroxy group of the hydroxylated cycloaraneosene derivative might be catalyzed by an unassigned hypothetical protein such as sdnG and sdnP to construct the cyclopentadiene moiety (PubMed:27072286). The FAD-dependent oxidoreductase sdnN is proposed to catalyze the oxidation at C9 of the hydroxylated cycloaraneosene derivative and also catalyze the Baeyer-Villiger oxidation to give the lactone intermediate (PubMed:27072286). The presumed lactone intermediate would be hydrolyzed to give an acrolein moiety and a carboxylate moiety (PubMed:27072286). Then, [4+2]cycloaddition would occur between the acrolein moiety and the cyclopentadiene moiety to give sordaricin (PubMed:27072286). SdnN might also be involved in the [4+2]cycloaddition after the hypothesized oxidation to accommodate the oxidized product and prompt the [4+2]cycloaddition (PubMed:27072286). GDP-6-deoxy-D-altrose may be biosynthesized from GDP-D-mannose by the putative GDP-mannose-4,6-dehydratase sdnI and the short-chain dehydrogenase sdnK (PubMed:27072286). The glycosyltransferase sdnJ catalyzes the attachment of 6-deoxy-D-altrose onto the 19-hydroxy group of sordaricin to give 4'-O-demethylsordarin (PubMed:27072286). The methyltransferase sdnD would complete the biosynthesis of sordarin (PubMed:27072286). Sordarin can be further modified into hypoxysordarin (PubMed:27072286). The unique acyl chain at the 3'-hydroxy group of hypoxysordarin would be constructed by an iterative type I PKS sdnO and the trans-acting polyketide methyltransferase sdnL. SdnL would be responsible for the introduction of an alpha-methyl group of the polyketide chain (PubMed:27072286). Alternatively, the putative beta-lactamase-like sdnR might be responsible for the cleavage and transfer of the polyketide chain from the PKS sdnO to sordarin (PubMed:27072286). Two putative cytochrome P450 monooxygenases, sdnQ and sdnT, might catalyze the epoxidations of the polyketide chain to complete the biosynthesis of hypoxysordarin (PubMed:27072286). Transcriptional regulators sdnM and sdnS are presumably encoded for the transcriptional regulation of the expression of the sdn gene cluster (PubMed:27072286).</text>
</comment>
<comment type="pathway">
    <text evidence="9">Antibiotic biosynthesis.</text>
</comment>
<comment type="domain">
    <text evidence="9">SdnO consists of a ketosynthase domain, acyltransferase domain, dehydratase domain, unassigned region, enoylreductase domain, beta-ketoreductase domain, acyl carrier protein (ACP) and a choline/carnitine acyltransferase domain (PubMed:27072286). The polyketide chain might be transferred to the 3'-hydroxy group of sordarin by the putative choline/carnitine acyltransferase domain of SdnO because there is no obvious acyltransferase of the polyketide chain in the sdn cluster (PubMed:27072286).</text>
</comment>